<protein>
    <recommendedName>
        <fullName>Immunoglobulin superfamily member 6</fullName>
        <shortName>IgSF6</shortName>
    </recommendedName>
</protein>
<keyword id="KW-1015">Disulfide bond</keyword>
<keyword id="KW-0393">Immunoglobulin domain</keyword>
<keyword id="KW-0472">Membrane</keyword>
<keyword id="KW-1185">Reference proteome</keyword>
<keyword id="KW-0732">Signal</keyword>
<keyword id="KW-0812">Transmembrane</keyword>
<keyword id="KW-1133">Transmembrane helix</keyword>
<dbReference type="EMBL" id="AJ278574">
    <property type="protein sequence ID" value="CAC20696.1"/>
    <property type="molecule type" value="Genomic_DNA"/>
</dbReference>
<dbReference type="EMBL" id="AJ278575">
    <property type="protein sequence ID" value="CAC20697.1"/>
    <property type="molecule type" value="mRNA"/>
</dbReference>
<dbReference type="CCDS" id="CCDS21801.1"/>
<dbReference type="RefSeq" id="NP_109616.1">
    <property type="nucleotide sequence ID" value="NM_030691.1"/>
</dbReference>
<dbReference type="SMR" id="P0C6B7"/>
<dbReference type="BioGRID" id="219799">
    <property type="interactions" value="1"/>
</dbReference>
<dbReference type="FunCoup" id="P0C6B7">
    <property type="interactions" value="3"/>
</dbReference>
<dbReference type="STRING" id="10090.ENSMUSP00000039059"/>
<dbReference type="PhosphoSitePlus" id="P0C6B7"/>
<dbReference type="PaxDb" id="10090-ENSMUSP00000039059"/>
<dbReference type="PeptideAtlas" id="P0C6B7"/>
<dbReference type="ProteomicsDB" id="269545"/>
<dbReference type="Antibodypedia" id="25724">
    <property type="antibodies" value="192 antibodies from 23 providers"/>
</dbReference>
<dbReference type="DNASU" id="80719"/>
<dbReference type="Ensembl" id="ENSMUST00000047194.4">
    <property type="protein sequence ID" value="ENSMUSP00000039059.3"/>
    <property type="gene ID" value="ENSMUSG00000035004.4"/>
</dbReference>
<dbReference type="GeneID" id="80719"/>
<dbReference type="KEGG" id="mmu:80719"/>
<dbReference type="UCSC" id="uc009jnm.1">
    <property type="organism name" value="mouse"/>
</dbReference>
<dbReference type="AGR" id="MGI:1891393"/>
<dbReference type="CTD" id="10261"/>
<dbReference type="MGI" id="MGI:1891393">
    <property type="gene designation" value="Igsf6"/>
</dbReference>
<dbReference type="VEuPathDB" id="HostDB:ENSMUSG00000035004"/>
<dbReference type="eggNOG" id="ENOG502S4JY">
    <property type="taxonomic scope" value="Eukaryota"/>
</dbReference>
<dbReference type="GeneTree" id="ENSGT00390000014131"/>
<dbReference type="HOGENOM" id="CLU_1160783_0_0_1"/>
<dbReference type="InParanoid" id="P0C6B7"/>
<dbReference type="OMA" id="VTIECTF"/>
<dbReference type="OrthoDB" id="9905432at2759"/>
<dbReference type="PhylomeDB" id="P0C6B7"/>
<dbReference type="TreeFam" id="TF335767"/>
<dbReference type="BioGRID-ORCS" id="80719">
    <property type="hits" value="2 hits in 76 CRISPR screens"/>
</dbReference>
<dbReference type="PRO" id="PR:P0C6B7"/>
<dbReference type="Proteomes" id="UP000000589">
    <property type="component" value="Chromosome 7"/>
</dbReference>
<dbReference type="RNAct" id="P0C6B7">
    <property type="molecule type" value="protein"/>
</dbReference>
<dbReference type="Bgee" id="ENSMUSG00000035004">
    <property type="expression patterns" value="Expressed in granulocyte and 55 other cell types or tissues"/>
</dbReference>
<dbReference type="GO" id="GO:0016020">
    <property type="term" value="C:membrane"/>
    <property type="evidence" value="ECO:0007669"/>
    <property type="project" value="UniProtKB-SubCell"/>
</dbReference>
<dbReference type="Gene3D" id="2.60.40.10">
    <property type="entry name" value="Immunoglobulins"/>
    <property type="match status" value="1"/>
</dbReference>
<dbReference type="InterPro" id="IPR007110">
    <property type="entry name" value="Ig-like_dom"/>
</dbReference>
<dbReference type="InterPro" id="IPR036179">
    <property type="entry name" value="Ig-like_dom_sf"/>
</dbReference>
<dbReference type="InterPro" id="IPR013783">
    <property type="entry name" value="Ig-like_fold"/>
</dbReference>
<dbReference type="InterPro" id="IPR039089">
    <property type="entry name" value="IGSF6"/>
</dbReference>
<dbReference type="PANTHER" id="PTHR15297">
    <property type="entry name" value="IMMUNOGLOBULIN SUPERFAMILY MEMBER 6"/>
    <property type="match status" value="1"/>
</dbReference>
<dbReference type="PANTHER" id="PTHR15297:SF2">
    <property type="entry name" value="IMMUNOGLOBULIN SUPERFAMILY MEMBER 6"/>
    <property type="match status" value="1"/>
</dbReference>
<dbReference type="SUPFAM" id="SSF48726">
    <property type="entry name" value="Immunoglobulin"/>
    <property type="match status" value="1"/>
</dbReference>
<dbReference type="PROSITE" id="PS50835">
    <property type="entry name" value="IG_LIKE"/>
    <property type="match status" value="1"/>
</dbReference>
<reference key="1">
    <citation type="journal article" date="2000" name="Immunogenetics">
        <title>The mouse and human IGSF6 (DORA) genes map to the inflammatory bowel disease 1 locus and are embedded in an intron of a gene of unknown function.</title>
        <authorList>
            <person name="Bates E.E.M."/>
            <person name="Kissenpfennig A."/>
            <person name="Peronne C."/>
            <person name="Mattei M.-G."/>
            <person name="Fossiez F."/>
            <person name="Malissen B."/>
            <person name="Lebecque S."/>
        </authorList>
    </citation>
    <scope>NUCLEOTIDE SEQUENCE [GENOMIC DNA / MRNA]</scope>
    <scope>TISSUE SPECIFICITY</scope>
</reference>
<comment type="subcellular location">
    <subcellularLocation>
        <location evidence="5">Membrane</location>
        <topology evidence="5">Single-pass type I membrane protein</topology>
    </subcellularLocation>
</comment>
<comment type="tissue specificity">
    <text evidence="4">Ubiquitous with higher expression in immune tissue.</text>
</comment>
<comment type="miscellaneous">
    <text>This gene is coded entirely within the intron of Mettl9 which is transcribed in the opposite strand of the DNA.</text>
</comment>
<gene>
    <name type="primary">Igsf6</name>
</gene>
<accession>P0C6B7</accession>
<feature type="signal peptide" evidence="1">
    <location>
        <begin position="1"/>
        <end position="27"/>
    </location>
</feature>
<feature type="chain" id="PRO_0000320138" description="Immunoglobulin superfamily member 6">
    <location>
        <begin position="28"/>
        <end position="237"/>
    </location>
</feature>
<feature type="topological domain" description="Extracellular" evidence="1">
    <location>
        <begin position="28"/>
        <end position="152"/>
    </location>
</feature>
<feature type="transmembrane region" description="Helical" evidence="1">
    <location>
        <begin position="153"/>
        <end position="173"/>
    </location>
</feature>
<feature type="topological domain" description="Cytoplasmic" evidence="1">
    <location>
        <begin position="174"/>
        <end position="237"/>
    </location>
</feature>
<feature type="domain" description="Ig-like C2-type">
    <location>
        <begin position="30"/>
        <end position="134"/>
    </location>
</feature>
<feature type="region of interest" description="Disordered" evidence="3">
    <location>
        <begin position="215"/>
        <end position="237"/>
    </location>
</feature>
<feature type="compositionally biased region" description="Basic and acidic residues" evidence="3">
    <location>
        <begin position="215"/>
        <end position="229"/>
    </location>
</feature>
<feature type="disulfide bond" evidence="2">
    <location>
        <begin position="51"/>
        <end position="118"/>
    </location>
</feature>
<sequence length="237" mass="26354">MGPVSARRSRLRPEISLILFQVGMVGACTVYVLQPGYLEVDYGSDAVTMECNFSTVGCPPVPPKSLWFRCGTHQPEALCLDGCRNEADKFTVKETLDPDQVFLTVNRLSPNDSAIYICGIAFPNELSPSAKHVGKGTTLVVRERLFSKEVRSFLIVLLALLSVYITGVCVTFIVLFKSKSNGPRSRETKGSKKKSARRIFQEIAQELYHKRYVETSHLPEQEGTDENRKALPNPGRA</sequence>
<evidence type="ECO:0000255" key="1"/>
<evidence type="ECO:0000255" key="2">
    <source>
        <dbReference type="PROSITE-ProRule" id="PRU00114"/>
    </source>
</evidence>
<evidence type="ECO:0000256" key="3">
    <source>
        <dbReference type="SAM" id="MobiDB-lite"/>
    </source>
</evidence>
<evidence type="ECO:0000269" key="4">
    <source>
    </source>
</evidence>
<evidence type="ECO:0000305" key="5"/>
<name>IGSF6_MOUSE</name>
<proteinExistence type="evidence at transcript level"/>
<organism>
    <name type="scientific">Mus musculus</name>
    <name type="common">Mouse</name>
    <dbReference type="NCBI Taxonomy" id="10090"/>
    <lineage>
        <taxon>Eukaryota</taxon>
        <taxon>Metazoa</taxon>
        <taxon>Chordata</taxon>
        <taxon>Craniata</taxon>
        <taxon>Vertebrata</taxon>
        <taxon>Euteleostomi</taxon>
        <taxon>Mammalia</taxon>
        <taxon>Eutheria</taxon>
        <taxon>Euarchontoglires</taxon>
        <taxon>Glires</taxon>
        <taxon>Rodentia</taxon>
        <taxon>Myomorpha</taxon>
        <taxon>Muroidea</taxon>
        <taxon>Muridae</taxon>
        <taxon>Murinae</taxon>
        <taxon>Mus</taxon>
        <taxon>Mus</taxon>
    </lineage>
</organism>